<comment type="subcellular location">
    <subcellularLocation>
        <location evidence="3">Secreted</location>
    </subcellularLocation>
    <text evidence="3">The mature toxins are clearly liberated from the multidomain precursors in the venom gland prior to venom expulsion and not by venom proteases upon secretion.</text>
</comment>
<comment type="tissue specificity">
    <text evidence="6">Expressed by the venom gland.</text>
</comment>
<comment type="PTM">
    <text evidence="5">Contains 3 disulfide bonds.</text>
</comment>
<comment type="similarity">
    <text evidence="5">Belongs to the scoloptoxin-XY family.</text>
</comment>
<name>TXX1B_ETHRU</name>
<accession>A0A023W145</accession>
<reference key="1">
    <citation type="journal article" date="2014" name="J. Proteomics">
        <title>Multifunctional warheads: diversification of the toxin arsenal of centipedes via novel multidomain transcripts.</title>
        <authorList>
            <person name="Undheim E.A."/>
            <person name="Sunagar K."/>
            <person name="Hamilton B.R."/>
            <person name="Jones A."/>
            <person name="Venter D.J."/>
            <person name="Fry B.G."/>
            <person name="King G.F."/>
        </authorList>
    </citation>
    <scope>NUCLEOTIDE SEQUENCE [MRNA]</scope>
    <scope>PROTEIN SEQUENCE OF 25-61</scope>
    <scope>IDENTIFICATION BY MASS SPECTROMETRY</scope>
    <scope>SUBCELLULAR LOCATION</scope>
    <source>
        <tissue>Venom</tissue>
        <tissue>Venom gland</tissue>
    </source>
</reference>
<proteinExistence type="evidence at protein level"/>
<organism>
    <name type="scientific">Ethmostigmus rubripes</name>
    <name type="common">Giant centipede</name>
    <dbReference type="NCBI Taxonomy" id="62613"/>
    <lineage>
        <taxon>Eukaryota</taxon>
        <taxon>Metazoa</taxon>
        <taxon>Ecdysozoa</taxon>
        <taxon>Arthropoda</taxon>
        <taxon>Myriapoda</taxon>
        <taxon>Chilopoda</taxon>
        <taxon>Pleurostigmophora</taxon>
        <taxon>Scolopendromorpha</taxon>
        <taxon>Scolopendridae</taxon>
        <taxon>Ethmostigmus</taxon>
    </lineage>
</organism>
<feature type="signal peptide" evidence="3">
    <location>
        <begin position="1"/>
        <end position="24"/>
    </location>
</feature>
<feature type="chain" id="PRO_5007368304" description="U-scoloptoxin-Er2.1a" evidence="3">
    <location>
        <begin position="25"/>
        <end position="61"/>
    </location>
</feature>
<feature type="peptide" id="PRO_0000446852" description="U-scoloptoxin-Er2.2b" evidence="1">
    <location>
        <begin position="64"/>
        <end position="78"/>
    </location>
</feature>
<feature type="propeptide" id="PRO_0000446853" evidence="1">
    <location>
        <begin position="79"/>
        <end position="88"/>
    </location>
</feature>
<feature type="region of interest" description="Disordered" evidence="2">
    <location>
        <begin position="66"/>
        <end position="88"/>
    </location>
</feature>
<sequence>MASQVVLSFALVVVLAVFVGQVDSCPSDCKCDYRSSQCRPANDDVHPNVCIDHYCVVMNLAKREQRPELSPGALDDSSEEKDNEASLA</sequence>
<keyword id="KW-0903">Direct protein sequencing</keyword>
<keyword id="KW-1015">Disulfide bond</keyword>
<keyword id="KW-0964">Secreted</keyword>
<keyword id="KW-0732">Signal</keyword>
<keyword id="KW-0800">Toxin</keyword>
<evidence type="ECO:0000250" key="1">
    <source>
        <dbReference type="UniProtKB" id="A0A023W140"/>
    </source>
</evidence>
<evidence type="ECO:0000256" key="2">
    <source>
        <dbReference type="SAM" id="MobiDB-lite"/>
    </source>
</evidence>
<evidence type="ECO:0000269" key="3">
    <source>
    </source>
</evidence>
<evidence type="ECO:0000303" key="4">
    <source>
    </source>
</evidence>
<evidence type="ECO:0000305" key="5"/>
<evidence type="ECO:0000305" key="6">
    <source>
    </source>
</evidence>
<evidence type="ECO:0000312" key="7">
    <source>
        <dbReference type="EMBL" id="AHY22595.1"/>
    </source>
</evidence>
<dbReference type="EMBL" id="KF130744">
    <property type="protein sequence ID" value="AHY22595.1"/>
    <property type="molecule type" value="mRNA"/>
</dbReference>
<dbReference type="EMBL" id="KF130745">
    <property type="protein sequence ID" value="AHY22596.1"/>
    <property type="molecule type" value="mRNA"/>
</dbReference>
<dbReference type="EMBL" id="KF130750">
    <property type="protein sequence ID" value="AHY22601.1"/>
    <property type="molecule type" value="mRNA"/>
</dbReference>
<dbReference type="GO" id="GO:0005576">
    <property type="term" value="C:extracellular region"/>
    <property type="evidence" value="ECO:0007669"/>
    <property type="project" value="UniProtKB-SubCell"/>
</dbReference>
<dbReference type="GO" id="GO:0090729">
    <property type="term" value="F:toxin activity"/>
    <property type="evidence" value="ECO:0007669"/>
    <property type="project" value="UniProtKB-KW"/>
</dbReference>
<protein>
    <recommendedName>
        <fullName evidence="5">U-scoloptoxin(XY)-Er1b</fullName>
        <shortName evidence="5">U-SLPTX(XY)-Er1b</shortName>
    </recommendedName>
    <alternativeName>
        <fullName evidence="7">U-scoloptoxin-Er4.1a2b</fullName>
        <shortName evidence="7">U-SLPTX-Er4.1a2b</shortName>
    </alternativeName>
    <component>
        <recommendedName>
            <fullName evidence="4">U-scoloptoxin-Er2.1a</fullName>
        </recommendedName>
    </component>
    <component>
        <recommendedName>
            <fullName evidence="4">U-scoloptoxin-Er2.2b</fullName>
        </recommendedName>
    </component>
</protein>